<comment type="function">
    <text evidence="1">Catalyzes the reversible cyclization of carbamoyl aspartate to dihydroorotate.</text>
</comment>
<comment type="catalytic activity">
    <reaction evidence="1">
        <text>(S)-dihydroorotate + H2O = N-carbamoyl-L-aspartate + H(+)</text>
        <dbReference type="Rhea" id="RHEA:24296"/>
        <dbReference type="ChEBI" id="CHEBI:15377"/>
        <dbReference type="ChEBI" id="CHEBI:15378"/>
        <dbReference type="ChEBI" id="CHEBI:30864"/>
        <dbReference type="ChEBI" id="CHEBI:32814"/>
        <dbReference type="EC" id="3.5.2.3"/>
    </reaction>
</comment>
<comment type="cofactor">
    <cofactor evidence="1">
        <name>Zn(2+)</name>
        <dbReference type="ChEBI" id="CHEBI:29105"/>
    </cofactor>
    <text evidence="1">Binds 2 Zn(2+) ions per subunit.</text>
</comment>
<comment type="pathway">
    <text evidence="1">Pyrimidine metabolism; UMP biosynthesis via de novo pathway; (S)-dihydroorotate from bicarbonate: step 3/3.</text>
</comment>
<comment type="similarity">
    <text evidence="1">Belongs to the metallo-dependent hydrolases superfamily. DHOase family. Class I DHOase subfamily.</text>
</comment>
<organism>
    <name type="scientific">Thermoplasma acidophilum (strain ATCC 25905 / DSM 1728 / JCM 9062 / NBRC 15155 / AMRC-C165)</name>
    <dbReference type="NCBI Taxonomy" id="273075"/>
    <lineage>
        <taxon>Archaea</taxon>
        <taxon>Methanobacteriati</taxon>
        <taxon>Thermoplasmatota</taxon>
        <taxon>Thermoplasmata</taxon>
        <taxon>Thermoplasmatales</taxon>
        <taxon>Thermoplasmataceae</taxon>
        <taxon>Thermoplasma</taxon>
    </lineage>
</organism>
<reference key="1">
    <citation type="journal article" date="2000" name="Nature">
        <title>The genome sequence of the thermoacidophilic scavenger Thermoplasma acidophilum.</title>
        <authorList>
            <person name="Ruepp A."/>
            <person name="Graml W."/>
            <person name="Santos-Martinez M.-L."/>
            <person name="Koretke K.K."/>
            <person name="Volker C."/>
            <person name="Mewes H.-W."/>
            <person name="Frishman D."/>
            <person name="Stocker S."/>
            <person name="Lupas A.N."/>
            <person name="Baumeister W."/>
        </authorList>
    </citation>
    <scope>NUCLEOTIDE SEQUENCE [LARGE SCALE GENOMIC DNA]</scope>
    <source>
        <strain>ATCC 25905 / DSM 1728 / JCM 9062 / NBRC 15155 / AMRC-C165</strain>
    </source>
</reference>
<name>PYRC_THEAC</name>
<evidence type="ECO:0000255" key="1">
    <source>
        <dbReference type="HAMAP-Rule" id="MF_00220"/>
    </source>
</evidence>
<dbReference type="EC" id="3.5.2.3" evidence="1"/>
<dbReference type="EMBL" id="AL445067">
    <property type="protein sequence ID" value="CAC12440.1"/>
    <property type="molecule type" value="Genomic_DNA"/>
</dbReference>
<dbReference type="SMR" id="Q9HIM0"/>
<dbReference type="FunCoup" id="Q9HIM0">
    <property type="interactions" value="57"/>
</dbReference>
<dbReference type="STRING" id="273075.gene:9572542"/>
<dbReference type="PaxDb" id="273075-Ta1319"/>
<dbReference type="DNASU" id="1456794"/>
<dbReference type="EnsemblBacteria" id="CAC12440">
    <property type="protein sequence ID" value="CAC12440"/>
    <property type="gene ID" value="CAC12440"/>
</dbReference>
<dbReference type="KEGG" id="tac:Ta1319"/>
<dbReference type="eggNOG" id="arCOG00689">
    <property type="taxonomic scope" value="Archaea"/>
</dbReference>
<dbReference type="HOGENOM" id="CLU_015572_1_1_2"/>
<dbReference type="InParanoid" id="Q9HIM0"/>
<dbReference type="OrthoDB" id="50279at2157"/>
<dbReference type="UniPathway" id="UPA00070">
    <property type="reaction ID" value="UER00117"/>
</dbReference>
<dbReference type="Proteomes" id="UP000001024">
    <property type="component" value="Chromosome"/>
</dbReference>
<dbReference type="GO" id="GO:0005737">
    <property type="term" value="C:cytoplasm"/>
    <property type="evidence" value="ECO:0007669"/>
    <property type="project" value="TreeGrafter"/>
</dbReference>
<dbReference type="GO" id="GO:0004038">
    <property type="term" value="F:allantoinase activity"/>
    <property type="evidence" value="ECO:0007669"/>
    <property type="project" value="TreeGrafter"/>
</dbReference>
<dbReference type="GO" id="GO:0004151">
    <property type="term" value="F:dihydroorotase activity"/>
    <property type="evidence" value="ECO:0007669"/>
    <property type="project" value="UniProtKB-UniRule"/>
</dbReference>
<dbReference type="GO" id="GO:0008270">
    <property type="term" value="F:zinc ion binding"/>
    <property type="evidence" value="ECO:0007669"/>
    <property type="project" value="UniProtKB-UniRule"/>
</dbReference>
<dbReference type="GO" id="GO:0044205">
    <property type="term" value="P:'de novo' UMP biosynthetic process"/>
    <property type="evidence" value="ECO:0007669"/>
    <property type="project" value="UniProtKB-UniRule"/>
</dbReference>
<dbReference type="GO" id="GO:0006145">
    <property type="term" value="P:purine nucleobase catabolic process"/>
    <property type="evidence" value="ECO:0007669"/>
    <property type="project" value="TreeGrafter"/>
</dbReference>
<dbReference type="CDD" id="cd01318">
    <property type="entry name" value="DHOase_IIb"/>
    <property type="match status" value="1"/>
</dbReference>
<dbReference type="Gene3D" id="3.20.20.140">
    <property type="entry name" value="Metal-dependent hydrolases"/>
    <property type="match status" value="1"/>
</dbReference>
<dbReference type="Gene3D" id="2.30.40.10">
    <property type="entry name" value="Urease, subunit C, domain 1"/>
    <property type="match status" value="1"/>
</dbReference>
<dbReference type="HAMAP" id="MF_00220_A">
    <property type="entry name" value="PyrC_classI_A"/>
    <property type="match status" value="1"/>
</dbReference>
<dbReference type="InterPro" id="IPR006680">
    <property type="entry name" value="Amidohydro-rel"/>
</dbReference>
<dbReference type="InterPro" id="IPR004722">
    <property type="entry name" value="DHOase"/>
</dbReference>
<dbReference type="InterPro" id="IPR050138">
    <property type="entry name" value="DHOase/Allantoinase_Hydrolase"/>
</dbReference>
<dbReference type="InterPro" id="IPR002195">
    <property type="entry name" value="Dihydroorotase_CS"/>
</dbReference>
<dbReference type="InterPro" id="IPR011059">
    <property type="entry name" value="Metal-dep_hydrolase_composite"/>
</dbReference>
<dbReference type="InterPro" id="IPR032466">
    <property type="entry name" value="Metal_Hydrolase"/>
</dbReference>
<dbReference type="NCBIfam" id="NF002284">
    <property type="entry name" value="PRK01211.1"/>
    <property type="match status" value="1"/>
</dbReference>
<dbReference type="PANTHER" id="PTHR43668">
    <property type="entry name" value="ALLANTOINASE"/>
    <property type="match status" value="1"/>
</dbReference>
<dbReference type="PANTHER" id="PTHR43668:SF2">
    <property type="entry name" value="ALLANTOINASE"/>
    <property type="match status" value="1"/>
</dbReference>
<dbReference type="Pfam" id="PF01979">
    <property type="entry name" value="Amidohydro_1"/>
    <property type="match status" value="1"/>
</dbReference>
<dbReference type="SUPFAM" id="SSF51338">
    <property type="entry name" value="Composite domain of metallo-dependent hydrolases"/>
    <property type="match status" value="1"/>
</dbReference>
<dbReference type="SUPFAM" id="SSF51556">
    <property type="entry name" value="Metallo-dependent hydrolases"/>
    <property type="match status" value="1"/>
</dbReference>
<dbReference type="PROSITE" id="PS00482">
    <property type="entry name" value="DIHYDROOROTASE_1"/>
    <property type="match status" value="1"/>
</dbReference>
<dbReference type="PROSITE" id="PS00483">
    <property type="entry name" value="DIHYDROOROTASE_2"/>
    <property type="match status" value="1"/>
</dbReference>
<gene>
    <name evidence="1" type="primary">pyrC</name>
    <name type="ordered locus">Ta1319</name>
</gene>
<keyword id="KW-0378">Hydrolase</keyword>
<keyword id="KW-0479">Metal-binding</keyword>
<keyword id="KW-0665">Pyrimidine biosynthesis</keyword>
<keyword id="KW-1185">Reference proteome</keyword>
<keyword id="KW-0862">Zinc</keyword>
<protein>
    <recommendedName>
        <fullName evidence="1">Dihydroorotase</fullName>
        <shortName evidence="1">DHOase</shortName>
        <ecNumber evidence="1">3.5.2.3</ecNumber>
    </recommendedName>
</protein>
<feature type="chain" id="PRO_0000147282" description="Dihydroorotase">
    <location>
        <begin position="1"/>
        <end position="414"/>
    </location>
</feature>
<feature type="active site" evidence="1">
    <location>
        <position position="280"/>
    </location>
</feature>
<feature type="binding site" evidence="1">
    <location>
        <position position="56"/>
    </location>
    <ligand>
        <name>Zn(2+)</name>
        <dbReference type="ChEBI" id="CHEBI:29105"/>
        <label>1</label>
    </ligand>
</feature>
<feature type="binding site" evidence="1">
    <location>
        <begin position="58"/>
        <end position="60"/>
    </location>
    <ligand>
        <name>substrate</name>
    </ligand>
</feature>
<feature type="binding site" evidence="1">
    <location>
        <position position="58"/>
    </location>
    <ligand>
        <name>Zn(2+)</name>
        <dbReference type="ChEBI" id="CHEBI:29105"/>
        <label>1</label>
    </ligand>
</feature>
<feature type="binding site" evidence="1">
    <location>
        <position position="90"/>
    </location>
    <ligand>
        <name>substrate</name>
    </ligand>
</feature>
<feature type="binding site" evidence="1">
    <location>
        <position position="138"/>
    </location>
    <ligand>
        <name>Zn(2+)</name>
        <dbReference type="ChEBI" id="CHEBI:29105"/>
        <label>1</label>
    </ligand>
</feature>
<feature type="binding site" evidence="1">
    <location>
        <position position="138"/>
    </location>
    <ligand>
        <name>Zn(2+)</name>
        <dbReference type="ChEBI" id="CHEBI:29105"/>
        <label>2</label>
    </ligand>
</feature>
<feature type="binding site" evidence="1">
    <location>
        <position position="171"/>
    </location>
    <ligand>
        <name>Zn(2+)</name>
        <dbReference type="ChEBI" id="CHEBI:29105"/>
        <label>2</label>
    </ligand>
</feature>
<feature type="binding site" evidence="1">
    <location>
        <position position="219"/>
    </location>
    <ligand>
        <name>Zn(2+)</name>
        <dbReference type="ChEBI" id="CHEBI:29105"/>
        <label>2</label>
    </ligand>
</feature>
<feature type="binding site" evidence="1">
    <location>
        <position position="280"/>
    </location>
    <ligand>
        <name>Zn(2+)</name>
        <dbReference type="ChEBI" id="CHEBI:29105"/>
        <label>1</label>
    </ligand>
</feature>
<feature type="binding site" evidence="1">
    <location>
        <position position="284"/>
    </location>
    <ligand>
        <name>substrate</name>
    </ligand>
</feature>
<feature type="modified residue" description="N6-carboxylysine" evidence="1">
    <location>
        <position position="138"/>
    </location>
</feature>
<accession>Q9HIM0</accession>
<sequence>MCMDRAICGNFYYGGKFDYLEVIVSDGKIAGIKKDAGNVPKTNYDGAILPAATDIHVHFRTPGETEKEDFGSGSLSAIYGGTTYVMDMPNNRFPITDYNAFGDKLGSIDSTSFADFSLYSMETGKNAMLLDRRSIGLKVYLGGSTNSTGTEVIEEGDIRKINEMNYPVVFHGESERCLKTHQMEEKNLRDHNLARPIDCEIEAAKYVSGLDIKTKIMAHVSSPDVTGNFLREVTPHHLLLNDEMPLGSFGKVNPPLRDSRTQKRLLDDYISGKFDILSSDHAPHTEDDKREFEFAKSGIIGVETRVPLFLALAQKKIVPLDVLYRTAIENPPSIFGIKKGKIEIGYDADFMVIDFTSMKRINDNRLHSKFPVSPFNGMDAIFPSHVIMRGNVVIDRYEDISDPMGVFIPKPQKE</sequence>
<proteinExistence type="inferred from homology"/>